<keyword id="KW-0687">Ribonucleoprotein</keyword>
<keyword id="KW-0689">Ribosomal protein</keyword>
<keyword id="KW-0694">RNA-binding</keyword>
<keyword id="KW-0699">rRNA-binding</keyword>
<dbReference type="EMBL" id="CP001015">
    <property type="protein sequence ID" value="ACF55721.1"/>
    <property type="molecule type" value="Genomic_DNA"/>
</dbReference>
<dbReference type="SMR" id="B5E6G6"/>
<dbReference type="KEGG" id="spx:SPG_0206"/>
<dbReference type="HOGENOM" id="CLU_093315_2_0_9"/>
<dbReference type="GO" id="GO:1990904">
    <property type="term" value="C:ribonucleoprotein complex"/>
    <property type="evidence" value="ECO:0007669"/>
    <property type="project" value="UniProtKB-KW"/>
</dbReference>
<dbReference type="GO" id="GO:0005840">
    <property type="term" value="C:ribosome"/>
    <property type="evidence" value="ECO:0007669"/>
    <property type="project" value="UniProtKB-KW"/>
</dbReference>
<dbReference type="GO" id="GO:0019843">
    <property type="term" value="F:rRNA binding"/>
    <property type="evidence" value="ECO:0007669"/>
    <property type="project" value="UniProtKB-UniRule"/>
</dbReference>
<dbReference type="GO" id="GO:0003735">
    <property type="term" value="F:structural constituent of ribosome"/>
    <property type="evidence" value="ECO:0007669"/>
    <property type="project" value="InterPro"/>
</dbReference>
<dbReference type="GO" id="GO:0006412">
    <property type="term" value="P:translation"/>
    <property type="evidence" value="ECO:0007669"/>
    <property type="project" value="UniProtKB-UniRule"/>
</dbReference>
<dbReference type="CDD" id="cd06089">
    <property type="entry name" value="KOW_RPL26"/>
    <property type="match status" value="1"/>
</dbReference>
<dbReference type="FunFam" id="2.30.30.30:FF:000004">
    <property type="entry name" value="50S ribosomal protein L24"/>
    <property type="match status" value="1"/>
</dbReference>
<dbReference type="Gene3D" id="2.30.30.30">
    <property type="match status" value="1"/>
</dbReference>
<dbReference type="HAMAP" id="MF_01326_B">
    <property type="entry name" value="Ribosomal_uL24_B"/>
    <property type="match status" value="1"/>
</dbReference>
<dbReference type="InterPro" id="IPR005824">
    <property type="entry name" value="KOW"/>
</dbReference>
<dbReference type="InterPro" id="IPR014722">
    <property type="entry name" value="Rib_uL2_dom2"/>
</dbReference>
<dbReference type="InterPro" id="IPR003256">
    <property type="entry name" value="Ribosomal_uL24"/>
</dbReference>
<dbReference type="InterPro" id="IPR005825">
    <property type="entry name" value="Ribosomal_uL24_CS"/>
</dbReference>
<dbReference type="InterPro" id="IPR041988">
    <property type="entry name" value="Ribosomal_uL24_KOW"/>
</dbReference>
<dbReference type="InterPro" id="IPR008991">
    <property type="entry name" value="Translation_prot_SH3-like_sf"/>
</dbReference>
<dbReference type="NCBIfam" id="TIGR01079">
    <property type="entry name" value="rplX_bact"/>
    <property type="match status" value="1"/>
</dbReference>
<dbReference type="PANTHER" id="PTHR12903">
    <property type="entry name" value="MITOCHONDRIAL RIBOSOMAL PROTEIN L24"/>
    <property type="match status" value="1"/>
</dbReference>
<dbReference type="Pfam" id="PF00467">
    <property type="entry name" value="KOW"/>
    <property type="match status" value="1"/>
</dbReference>
<dbReference type="Pfam" id="PF17136">
    <property type="entry name" value="ribosomal_L24"/>
    <property type="match status" value="1"/>
</dbReference>
<dbReference type="SMART" id="SM00739">
    <property type="entry name" value="KOW"/>
    <property type="match status" value="1"/>
</dbReference>
<dbReference type="SUPFAM" id="SSF50104">
    <property type="entry name" value="Translation proteins SH3-like domain"/>
    <property type="match status" value="1"/>
</dbReference>
<dbReference type="PROSITE" id="PS01108">
    <property type="entry name" value="RIBOSOMAL_L24"/>
    <property type="match status" value="1"/>
</dbReference>
<feature type="chain" id="PRO_1000142046" description="Large ribosomal subunit protein uL24">
    <location>
        <begin position="1"/>
        <end position="101"/>
    </location>
</feature>
<protein>
    <recommendedName>
        <fullName evidence="1">Large ribosomal subunit protein uL24</fullName>
    </recommendedName>
    <alternativeName>
        <fullName evidence="2">50S ribosomal protein L24</fullName>
    </alternativeName>
</protein>
<reference key="1">
    <citation type="journal article" date="2001" name="Microb. Drug Resist.">
        <title>Annotated draft genomic sequence from a Streptococcus pneumoniae type 19F clinical isolate.</title>
        <authorList>
            <person name="Dopazo J."/>
            <person name="Mendoza A."/>
            <person name="Herrero J."/>
            <person name="Caldara F."/>
            <person name="Humbert Y."/>
            <person name="Friedli L."/>
            <person name="Guerrier M."/>
            <person name="Grand-Schenk E."/>
            <person name="Gandin C."/>
            <person name="de Francesco M."/>
            <person name="Polissi A."/>
            <person name="Buell G."/>
            <person name="Feger G."/>
            <person name="Garcia E."/>
            <person name="Peitsch M."/>
            <person name="Garcia-Bustos J.F."/>
        </authorList>
    </citation>
    <scope>NUCLEOTIDE SEQUENCE [LARGE SCALE GENOMIC DNA]</scope>
    <source>
        <strain>G54</strain>
    </source>
</reference>
<reference key="2">
    <citation type="submission" date="2008-03" db="EMBL/GenBank/DDBJ databases">
        <title>Pneumococcal beta glucoside metabolism investigated by whole genome comparison.</title>
        <authorList>
            <person name="Mulas L."/>
            <person name="Trappetti C."/>
            <person name="Hakenbeck R."/>
            <person name="Iannelli F."/>
            <person name="Pozzi G."/>
            <person name="Davidsen T.M."/>
            <person name="Tettelin H."/>
            <person name="Oggioni M."/>
        </authorList>
    </citation>
    <scope>NUCLEOTIDE SEQUENCE [LARGE SCALE GENOMIC DNA]</scope>
    <source>
        <strain>G54</strain>
    </source>
</reference>
<name>RL24_STRP4</name>
<sequence>MFVKKGDKVRVIAGKDKGTEAVVLTALPKVNKVIVEGVNIVKKHQRPTNELPQGGIIEKEAAIHVSNVQVLDKNGVAGRVGYKFVDGKKVRYNKKSGEVLD</sequence>
<evidence type="ECO:0000255" key="1">
    <source>
        <dbReference type="HAMAP-Rule" id="MF_01326"/>
    </source>
</evidence>
<evidence type="ECO:0000305" key="2"/>
<proteinExistence type="inferred from homology"/>
<organism>
    <name type="scientific">Streptococcus pneumoniae serotype 19F (strain G54)</name>
    <dbReference type="NCBI Taxonomy" id="512566"/>
    <lineage>
        <taxon>Bacteria</taxon>
        <taxon>Bacillati</taxon>
        <taxon>Bacillota</taxon>
        <taxon>Bacilli</taxon>
        <taxon>Lactobacillales</taxon>
        <taxon>Streptococcaceae</taxon>
        <taxon>Streptococcus</taxon>
    </lineage>
</organism>
<comment type="function">
    <text evidence="1">One of two assembly initiator proteins, it binds directly to the 5'-end of the 23S rRNA, where it nucleates assembly of the 50S subunit.</text>
</comment>
<comment type="function">
    <text evidence="1">One of the proteins that surrounds the polypeptide exit tunnel on the outside of the subunit.</text>
</comment>
<comment type="subunit">
    <text evidence="1">Part of the 50S ribosomal subunit.</text>
</comment>
<comment type="similarity">
    <text evidence="1">Belongs to the universal ribosomal protein uL24 family.</text>
</comment>
<gene>
    <name evidence="1" type="primary">rplX</name>
    <name type="ordered locus">SPG_0206</name>
</gene>
<accession>B5E6G6</accession>